<proteinExistence type="inferred from homology"/>
<protein>
    <recommendedName>
        <fullName evidence="1">Thiamine-phosphate synthase</fullName>
        <shortName evidence="1">TP synthase</shortName>
        <shortName evidence="1">TPS</shortName>
        <ecNumber evidence="1">2.5.1.3</ecNumber>
    </recommendedName>
    <alternativeName>
        <fullName evidence="1">Thiamine-phosphate pyrophosphorylase</fullName>
        <shortName evidence="1">TMP pyrophosphorylase</shortName>
        <shortName evidence="1">TMP-PPase</shortName>
    </alternativeName>
</protein>
<gene>
    <name evidence="1" type="primary">thiE</name>
    <name type="ordered locus">CLK_3652</name>
</gene>
<feature type="chain" id="PRO_0000336384" description="Thiamine-phosphate synthase">
    <location>
        <begin position="1"/>
        <end position="205"/>
    </location>
</feature>
<feature type="binding site" evidence="1">
    <location>
        <begin position="37"/>
        <end position="41"/>
    </location>
    <ligand>
        <name>4-amino-2-methyl-5-(diphosphooxymethyl)pyrimidine</name>
        <dbReference type="ChEBI" id="CHEBI:57841"/>
    </ligand>
</feature>
<feature type="binding site" evidence="1">
    <location>
        <position position="69"/>
    </location>
    <ligand>
        <name>4-amino-2-methyl-5-(diphosphooxymethyl)pyrimidine</name>
        <dbReference type="ChEBI" id="CHEBI:57841"/>
    </ligand>
</feature>
<feature type="binding site" evidence="1">
    <location>
        <position position="70"/>
    </location>
    <ligand>
        <name>Mg(2+)</name>
        <dbReference type="ChEBI" id="CHEBI:18420"/>
    </ligand>
</feature>
<feature type="binding site" evidence="1">
    <location>
        <position position="89"/>
    </location>
    <ligand>
        <name>Mg(2+)</name>
        <dbReference type="ChEBI" id="CHEBI:18420"/>
    </ligand>
</feature>
<feature type="binding site" evidence="1">
    <location>
        <position position="108"/>
    </location>
    <ligand>
        <name>4-amino-2-methyl-5-(diphosphooxymethyl)pyrimidine</name>
        <dbReference type="ChEBI" id="CHEBI:57841"/>
    </ligand>
</feature>
<feature type="binding site" evidence="1">
    <location>
        <begin position="134"/>
        <end position="136"/>
    </location>
    <ligand>
        <name>2-[(2R,5Z)-2-carboxy-4-methylthiazol-5(2H)-ylidene]ethyl phosphate</name>
        <dbReference type="ChEBI" id="CHEBI:62899"/>
    </ligand>
</feature>
<feature type="binding site" evidence="1">
    <location>
        <position position="137"/>
    </location>
    <ligand>
        <name>4-amino-2-methyl-5-(diphosphooxymethyl)pyrimidine</name>
        <dbReference type="ChEBI" id="CHEBI:57841"/>
    </ligand>
</feature>
<feature type="binding site" evidence="1">
    <location>
        <position position="165"/>
    </location>
    <ligand>
        <name>2-[(2R,5Z)-2-carboxy-4-methylthiazol-5(2H)-ylidene]ethyl phosphate</name>
        <dbReference type="ChEBI" id="CHEBI:62899"/>
    </ligand>
</feature>
<feature type="binding site" evidence="1">
    <location>
        <begin position="185"/>
        <end position="186"/>
    </location>
    <ligand>
        <name>2-[(2R,5Z)-2-carboxy-4-methylthiazol-5(2H)-ylidene]ethyl phosphate</name>
        <dbReference type="ChEBI" id="CHEBI:62899"/>
    </ligand>
</feature>
<comment type="function">
    <text evidence="1">Condenses 4-methyl-5-(beta-hydroxyethyl)thiazole monophosphate (THZ-P) and 2-methyl-4-amino-5-hydroxymethyl pyrimidine pyrophosphate (HMP-PP) to form thiamine monophosphate (TMP).</text>
</comment>
<comment type="catalytic activity">
    <reaction evidence="1">
        <text>2-[(2R,5Z)-2-carboxy-4-methylthiazol-5(2H)-ylidene]ethyl phosphate + 4-amino-2-methyl-5-(diphosphooxymethyl)pyrimidine + 2 H(+) = thiamine phosphate + CO2 + diphosphate</text>
        <dbReference type="Rhea" id="RHEA:47844"/>
        <dbReference type="ChEBI" id="CHEBI:15378"/>
        <dbReference type="ChEBI" id="CHEBI:16526"/>
        <dbReference type="ChEBI" id="CHEBI:33019"/>
        <dbReference type="ChEBI" id="CHEBI:37575"/>
        <dbReference type="ChEBI" id="CHEBI:57841"/>
        <dbReference type="ChEBI" id="CHEBI:62899"/>
        <dbReference type="EC" id="2.5.1.3"/>
    </reaction>
</comment>
<comment type="catalytic activity">
    <reaction evidence="1">
        <text>2-(2-carboxy-4-methylthiazol-5-yl)ethyl phosphate + 4-amino-2-methyl-5-(diphosphooxymethyl)pyrimidine + 2 H(+) = thiamine phosphate + CO2 + diphosphate</text>
        <dbReference type="Rhea" id="RHEA:47848"/>
        <dbReference type="ChEBI" id="CHEBI:15378"/>
        <dbReference type="ChEBI" id="CHEBI:16526"/>
        <dbReference type="ChEBI" id="CHEBI:33019"/>
        <dbReference type="ChEBI" id="CHEBI:37575"/>
        <dbReference type="ChEBI" id="CHEBI:57841"/>
        <dbReference type="ChEBI" id="CHEBI:62890"/>
        <dbReference type="EC" id="2.5.1.3"/>
    </reaction>
</comment>
<comment type="catalytic activity">
    <reaction evidence="1">
        <text>4-methyl-5-(2-phosphooxyethyl)-thiazole + 4-amino-2-methyl-5-(diphosphooxymethyl)pyrimidine + H(+) = thiamine phosphate + diphosphate</text>
        <dbReference type="Rhea" id="RHEA:22328"/>
        <dbReference type="ChEBI" id="CHEBI:15378"/>
        <dbReference type="ChEBI" id="CHEBI:33019"/>
        <dbReference type="ChEBI" id="CHEBI:37575"/>
        <dbReference type="ChEBI" id="CHEBI:57841"/>
        <dbReference type="ChEBI" id="CHEBI:58296"/>
        <dbReference type="EC" id="2.5.1.3"/>
    </reaction>
</comment>
<comment type="cofactor">
    <cofactor evidence="1">
        <name>Mg(2+)</name>
        <dbReference type="ChEBI" id="CHEBI:18420"/>
    </cofactor>
    <text evidence="1">Binds 1 Mg(2+) ion per subunit.</text>
</comment>
<comment type="pathway">
    <text evidence="1">Cofactor biosynthesis; thiamine diphosphate biosynthesis; thiamine phosphate from 4-amino-2-methyl-5-diphosphomethylpyrimidine and 4-methyl-5-(2-phosphoethyl)-thiazole: step 1/1.</text>
</comment>
<comment type="similarity">
    <text evidence="1">Belongs to the thiamine-phosphate synthase family.</text>
</comment>
<reference key="1">
    <citation type="journal article" date="2007" name="PLoS ONE">
        <title>Analysis of the neurotoxin complex genes in Clostridium botulinum A1-A4 and B1 strains: BoNT/A3, /Ba4 and /B1 clusters are located within plasmids.</title>
        <authorList>
            <person name="Smith T.J."/>
            <person name="Hill K.K."/>
            <person name="Foley B.T."/>
            <person name="Detter J.C."/>
            <person name="Munk A.C."/>
            <person name="Bruce D.C."/>
            <person name="Doggett N.A."/>
            <person name="Smith L.A."/>
            <person name="Marks J.D."/>
            <person name="Xie G."/>
            <person name="Brettin T.S."/>
        </authorList>
    </citation>
    <scope>NUCLEOTIDE SEQUENCE [LARGE SCALE GENOMIC DNA]</scope>
    <source>
        <strain>Loch Maree / Type A3</strain>
    </source>
</reference>
<dbReference type="EC" id="2.5.1.3" evidence="1"/>
<dbReference type="EMBL" id="CP000962">
    <property type="protein sequence ID" value="ACA56025.1"/>
    <property type="molecule type" value="Genomic_DNA"/>
</dbReference>
<dbReference type="RefSeq" id="WP_012343935.1">
    <property type="nucleotide sequence ID" value="NC_010520.1"/>
</dbReference>
<dbReference type="SMR" id="B1KV12"/>
<dbReference type="KEGG" id="cbl:CLK_3652"/>
<dbReference type="HOGENOM" id="CLU_018272_3_2_9"/>
<dbReference type="UniPathway" id="UPA00060">
    <property type="reaction ID" value="UER00141"/>
</dbReference>
<dbReference type="GO" id="GO:0005737">
    <property type="term" value="C:cytoplasm"/>
    <property type="evidence" value="ECO:0007669"/>
    <property type="project" value="TreeGrafter"/>
</dbReference>
<dbReference type="GO" id="GO:0000287">
    <property type="term" value="F:magnesium ion binding"/>
    <property type="evidence" value="ECO:0007669"/>
    <property type="project" value="UniProtKB-UniRule"/>
</dbReference>
<dbReference type="GO" id="GO:0004789">
    <property type="term" value="F:thiamine-phosphate diphosphorylase activity"/>
    <property type="evidence" value="ECO:0007669"/>
    <property type="project" value="UniProtKB-UniRule"/>
</dbReference>
<dbReference type="GO" id="GO:0009228">
    <property type="term" value="P:thiamine biosynthetic process"/>
    <property type="evidence" value="ECO:0007669"/>
    <property type="project" value="UniProtKB-KW"/>
</dbReference>
<dbReference type="GO" id="GO:0009229">
    <property type="term" value="P:thiamine diphosphate biosynthetic process"/>
    <property type="evidence" value="ECO:0007669"/>
    <property type="project" value="UniProtKB-UniRule"/>
</dbReference>
<dbReference type="CDD" id="cd00564">
    <property type="entry name" value="TMP_TenI"/>
    <property type="match status" value="1"/>
</dbReference>
<dbReference type="FunFam" id="3.20.20.70:FF:000096">
    <property type="entry name" value="Thiamine-phosphate synthase"/>
    <property type="match status" value="1"/>
</dbReference>
<dbReference type="Gene3D" id="3.20.20.70">
    <property type="entry name" value="Aldolase class I"/>
    <property type="match status" value="1"/>
</dbReference>
<dbReference type="HAMAP" id="MF_00097">
    <property type="entry name" value="TMP_synthase"/>
    <property type="match status" value="1"/>
</dbReference>
<dbReference type="InterPro" id="IPR013785">
    <property type="entry name" value="Aldolase_TIM"/>
</dbReference>
<dbReference type="InterPro" id="IPR036206">
    <property type="entry name" value="ThiamineP_synth_sf"/>
</dbReference>
<dbReference type="InterPro" id="IPR022998">
    <property type="entry name" value="ThiamineP_synth_TenI"/>
</dbReference>
<dbReference type="InterPro" id="IPR034291">
    <property type="entry name" value="TMP_synthase"/>
</dbReference>
<dbReference type="NCBIfam" id="TIGR00693">
    <property type="entry name" value="thiE"/>
    <property type="match status" value="1"/>
</dbReference>
<dbReference type="PANTHER" id="PTHR20857:SF23">
    <property type="entry name" value="THIAMINE BIOSYNTHETIC BIFUNCTIONAL ENZYME"/>
    <property type="match status" value="1"/>
</dbReference>
<dbReference type="PANTHER" id="PTHR20857">
    <property type="entry name" value="THIAMINE-PHOSPHATE PYROPHOSPHORYLASE"/>
    <property type="match status" value="1"/>
</dbReference>
<dbReference type="Pfam" id="PF02581">
    <property type="entry name" value="TMP-TENI"/>
    <property type="match status" value="1"/>
</dbReference>
<dbReference type="SUPFAM" id="SSF51391">
    <property type="entry name" value="Thiamin phosphate synthase"/>
    <property type="match status" value="1"/>
</dbReference>
<keyword id="KW-0460">Magnesium</keyword>
<keyword id="KW-0479">Metal-binding</keyword>
<keyword id="KW-0784">Thiamine biosynthesis</keyword>
<keyword id="KW-0808">Transferase</keyword>
<name>THIE_CLOBM</name>
<evidence type="ECO:0000255" key="1">
    <source>
        <dbReference type="HAMAP-Rule" id="MF_00097"/>
    </source>
</evidence>
<sequence length="205" mass="22362">MEINYGLYLITDRRFLKGRQLKKVVEDAILGGVTIVQVREKDVSTREFYNVAKEVKEVTDYYKVPIIINDRLDIAQAIDANGVHLGQKDMHLNIAREILGKDKIIGISVGNVKEALEAQNNGADYLGIGTIFPTGSKKDVDAIIGIDGLSKIKDSISIPSVAIGGINKTNFKDVLKTGIEGISVISAILDEDDIKLAANNLLINK</sequence>
<accession>B1KV12</accession>
<organism>
    <name type="scientific">Clostridium botulinum (strain Loch Maree / Type A3)</name>
    <dbReference type="NCBI Taxonomy" id="498214"/>
    <lineage>
        <taxon>Bacteria</taxon>
        <taxon>Bacillati</taxon>
        <taxon>Bacillota</taxon>
        <taxon>Clostridia</taxon>
        <taxon>Eubacteriales</taxon>
        <taxon>Clostridiaceae</taxon>
        <taxon>Clostridium</taxon>
    </lineage>
</organism>